<proteinExistence type="inferred from homology"/>
<dbReference type="EC" id="3.5.4.5" evidence="1"/>
<dbReference type="EMBL" id="CP000948">
    <property type="protein sequence ID" value="ACB03308.1"/>
    <property type="molecule type" value="Genomic_DNA"/>
</dbReference>
<dbReference type="RefSeq" id="WP_000553555.1">
    <property type="nucleotide sequence ID" value="NC_010473.1"/>
</dbReference>
<dbReference type="SMR" id="B1X7N2"/>
<dbReference type="GeneID" id="93775039"/>
<dbReference type="KEGG" id="ecd:ECDH10B_2300"/>
<dbReference type="HOGENOM" id="CLU_052424_0_0_6"/>
<dbReference type="GO" id="GO:0005829">
    <property type="term" value="C:cytosol"/>
    <property type="evidence" value="ECO:0007669"/>
    <property type="project" value="TreeGrafter"/>
</dbReference>
<dbReference type="GO" id="GO:0004126">
    <property type="term" value="F:cytidine deaminase activity"/>
    <property type="evidence" value="ECO:0007669"/>
    <property type="project" value="UniProtKB-UniRule"/>
</dbReference>
<dbReference type="GO" id="GO:0042802">
    <property type="term" value="F:identical protein binding"/>
    <property type="evidence" value="ECO:0007669"/>
    <property type="project" value="UniProtKB-ARBA"/>
</dbReference>
<dbReference type="GO" id="GO:0008270">
    <property type="term" value="F:zinc ion binding"/>
    <property type="evidence" value="ECO:0007669"/>
    <property type="project" value="UniProtKB-UniRule"/>
</dbReference>
<dbReference type="GO" id="GO:0009972">
    <property type="term" value="P:cytidine deamination"/>
    <property type="evidence" value="ECO:0007669"/>
    <property type="project" value="InterPro"/>
</dbReference>
<dbReference type="CDD" id="cd01283">
    <property type="entry name" value="cytidine_deaminase"/>
    <property type="match status" value="2"/>
</dbReference>
<dbReference type="FunFam" id="3.40.140.10:FF:000006">
    <property type="entry name" value="Cytidine deaminase"/>
    <property type="match status" value="1"/>
</dbReference>
<dbReference type="FunFam" id="3.40.140.10:FF:000007">
    <property type="entry name" value="Cytidine deaminase"/>
    <property type="match status" value="1"/>
</dbReference>
<dbReference type="Gene3D" id="3.40.140.10">
    <property type="entry name" value="Cytidine Deaminase, domain 2"/>
    <property type="match status" value="2"/>
</dbReference>
<dbReference type="HAMAP" id="MF_01558">
    <property type="entry name" value="Cyt_deam"/>
    <property type="match status" value="1"/>
</dbReference>
<dbReference type="InterPro" id="IPR016192">
    <property type="entry name" value="APOBEC/CMP_deaminase_Zn-bd"/>
</dbReference>
<dbReference type="InterPro" id="IPR002125">
    <property type="entry name" value="CMP_dCMP_dom"/>
</dbReference>
<dbReference type="InterPro" id="IPR013171">
    <property type="entry name" value="Cyd/dCyd_deaminase_Zn-bd"/>
</dbReference>
<dbReference type="InterPro" id="IPR050202">
    <property type="entry name" value="Cyt/Deoxycyt_deaminase"/>
</dbReference>
<dbReference type="InterPro" id="IPR006263">
    <property type="entry name" value="Cyt_deam_dimer"/>
</dbReference>
<dbReference type="InterPro" id="IPR016193">
    <property type="entry name" value="Cytidine_deaminase-like"/>
</dbReference>
<dbReference type="InterPro" id="IPR020797">
    <property type="entry name" value="Cytidine_deaminase_bacteria"/>
</dbReference>
<dbReference type="NCBIfam" id="TIGR01355">
    <property type="entry name" value="cyt_deam_dimer"/>
    <property type="match status" value="1"/>
</dbReference>
<dbReference type="NCBIfam" id="NF006537">
    <property type="entry name" value="PRK09027.1"/>
    <property type="match status" value="1"/>
</dbReference>
<dbReference type="PANTHER" id="PTHR11644">
    <property type="entry name" value="CYTIDINE DEAMINASE"/>
    <property type="match status" value="1"/>
</dbReference>
<dbReference type="PANTHER" id="PTHR11644:SF2">
    <property type="entry name" value="CYTIDINE DEAMINASE"/>
    <property type="match status" value="1"/>
</dbReference>
<dbReference type="Pfam" id="PF00383">
    <property type="entry name" value="dCMP_cyt_deam_1"/>
    <property type="match status" value="1"/>
</dbReference>
<dbReference type="Pfam" id="PF08211">
    <property type="entry name" value="dCMP_cyt_deam_2"/>
    <property type="match status" value="1"/>
</dbReference>
<dbReference type="PIRSF" id="PIRSF006334">
    <property type="entry name" value="Cdd_plus_pseudo"/>
    <property type="match status" value="1"/>
</dbReference>
<dbReference type="SUPFAM" id="SSF53927">
    <property type="entry name" value="Cytidine deaminase-like"/>
    <property type="match status" value="2"/>
</dbReference>
<dbReference type="PROSITE" id="PS00903">
    <property type="entry name" value="CYT_DCMP_DEAMINASES_1"/>
    <property type="match status" value="1"/>
</dbReference>
<dbReference type="PROSITE" id="PS51747">
    <property type="entry name" value="CYT_DCMP_DEAMINASES_2"/>
    <property type="match status" value="2"/>
</dbReference>
<sequence length="294" mass="31540">MHPRFQTAFAQLADNLQSALEPILADKYFPALLTGEQVSSLKSATGLDEDALAFALLPLAAACARTPLSNFNVGAIARGVSGTWYFGANMEFIGATMQQTVHAEQSAISHAWLSGEKALAAITVNYTPCGHCRQFMNELNSGLDLRIHLPGREAHALRDYLPDAFGPKDLEIKTLLMDEQDHGYALTGDALSQAAIAAANRSHMPYSKSPSGVALECKDGRIFSGSYAENAAFNPTLPPLQGALILLNLKGYDYPDIQRAVLAEKADAPLIQWDATSATLKALGCHSIDRVLLA</sequence>
<protein>
    <recommendedName>
        <fullName evidence="1">Cytidine deaminase</fullName>
        <ecNumber evidence="1">3.5.4.5</ecNumber>
    </recommendedName>
    <alternativeName>
        <fullName evidence="1">Cytidine aminohydrolase</fullName>
        <shortName evidence="1">CDA</shortName>
    </alternativeName>
</protein>
<organism>
    <name type="scientific">Escherichia coli (strain K12 / DH10B)</name>
    <dbReference type="NCBI Taxonomy" id="316385"/>
    <lineage>
        <taxon>Bacteria</taxon>
        <taxon>Pseudomonadati</taxon>
        <taxon>Pseudomonadota</taxon>
        <taxon>Gammaproteobacteria</taxon>
        <taxon>Enterobacterales</taxon>
        <taxon>Enterobacteriaceae</taxon>
        <taxon>Escherichia</taxon>
    </lineage>
</organism>
<keyword id="KW-0378">Hydrolase</keyword>
<keyword id="KW-0479">Metal-binding</keyword>
<keyword id="KW-0862">Zinc</keyword>
<name>CDD_ECODH</name>
<evidence type="ECO:0000255" key="1">
    <source>
        <dbReference type="HAMAP-Rule" id="MF_01558"/>
    </source>
</evidence>
<evidence type="ECO:0000255" key="2">
    <source>
        <dbReference type="PROSITE-ProRule" id="PRU01083"/>
    </source>
</evidence>
<feature type="chain" id="PRO_1000147099" description="Cytidine deaminase">
    <location>
        <begin position="1"/>
        <end position="294"/>
    </location>
</feature>
<feature type="domain" description="CMP/dCMP-type deaminase 1" evidence="2">
    <location>
        <begin position="48"/>
        <end position="168"/>
    </location>
</feature>
<feature type="domain" description="CMP/dCMP-type deaminase 2" evidence="2">
    <location>
        <begin position="186"/>
        <end position="294"/>
    </location>
</feature>
<feature type="active site" description="Proton donor" evidence="1">
    <location>
        <position position="104"/>
    </location>
</feature>
<feature type="binding site" evidence="1">
    <location>
        <begin position="89"/>
        <end position="91"/>
    </location>
    <ligand>
        <name>substrate</name>
    </ligand>
</feature>
<feature type="binding site" evidence="1">
    <location>
        <position position="102"/>
    </location>
    <ligand>
        <name>Zn(2+)</name>
        <dbReference type="ChEBI" id="CHEBI:29105"/>
        <note>catalytic</note>
    </ligand>
</feature>
<feature type="binding site" evidence="1">
    <location>
        <position position="129"/>
    </location>
    <ligand>
        <name>Zn(2+)</name>
        <dbReference type="ChEBI" id="CHEBI:29105"/>
        <note>catalytic</note>
    </ligand>
</feature>
<feature type="binding site" evidence="1">
    <location>
        <position position="132"/>
    </location>
    <ligand>
        <name>Zn(2+)</name>
        <dbReference type="ChEBI" id="CHEBI:29105"/>
        <note>catalytic</note>
    </ligand>
</feature>
<comment type="function">
    <text evidence="1">This enzyme scavenges exogenous and endogenous cytidine and 2'-deoxycytidine for UMP synthesis.</text>
</comment>
<comment type="catalytic activity">
    <reaction evidence="1">
        <text>cytidine + H2O + H(+) = uridine + NH4(+)</text>
        <dbReference type="Rhea" id="RHEA:16069"/>
        <dbReference type="ChEBI" id="CHEBI:15377"/>
        <dbReference type="ChEBI" id="CHEBI:15378"/>
        <dbReference type="ChEBI" id="CHEBI:16704"/>
        <dbReference type="ChEBI" id="CHEBI:17562"/>
        <dbReference type="ChEBI" id="CHEBI:28938"/>
        <dbReference type="EC" id="3.5.4.5"/>
    </reaction>
</comment>
<comment type="catalytic activity">
    <reaction evidence="1">
        <text>2'-deoxycytidine + H2O + H(+) = 2'-deoxyuridine + NH4(+)</text>
        <dbReference type="Rhea" id="RHEA:13433"/>
        <dbReference type="ChEBI" id="CHEBI:15377"/>
        <dbReference type="ChEBI" id="CHEBI:15378"/>
        <dbReference type="ChEBI" id="CHEBI:15698"/>
        <dbReference type="ChEBI" id="CHEBI:16450"/>
        <dbReference type="ChEBI" id="CHEBI:28938"/>
        <dbReference type="EC" id="3.5.4.5"/>
    </reaction>
</comment>
<comment type="cofactor">
    <cofactor evidence="1">
        <name>Zn(2+)</name>
        <dbReference type="ChEBI" id="CHEBI:29105"/>
    </cofactor>
    <text evidence="1">Binds 1 zinc ion.</text>
</comment>
<comment type="subunit">
    <text evidence="1">Homodimer.</text>
</comment>
<comment type="similarity">
    <text evidence="1">Belongs to the cytidine and deoxycytidylate deaminase family.</text>
</comment>
<accession>B1X7N2</accession>
<gene>
    <name evidence="1" type="primary">cdd</name>
    <name type="ordered locus">ECDH10B_2300</name>
</gene>
<reference key="1">
    <citation type="journal article" date="2008" name="J. Bacteriol.">
        <title>The complete genome sequence of Escherichia coli DH10B: insights into the biology of a laboratory workhorse.</title>
        <authorList>
            <person name="Durfee T."/>
            <person name="Nelson R."/>
            <person name="Baldwin S."/>
            <person name="Plunkett G. III"/>
            <person name="Burland V."/>
            <person name="Mau B."/>
            <person name="Petrosino J.F."/>
            <person name="Qin X."/>
            <person name="Muzny D.M."/>
            <person name="Ayele M."/>
            <person name="Gibbs R.A."/>
            <person name="Csorgo B."/>
            <person name="Posfai G."/>
            <person name="Weinstock G.M."/>
            <person name="Blattner F.R."/>
        </authorList>
    </citation>
    <scope>NUCLEOTIDE SEQUENCE [LARGE SCALE GENOMIC DNA]</scope>
    <source>
        <strain>K12 / DH10B</strain>
    </source>
</reference>